<accession>Q08CY4</accession>
<accession>A4IGR3</accession>
<protein>
    <recommendedName>
        <fullName>Telomere length regulation protein TEL2 homolog</fullName>
    </recommendedName>
</protein>
<comment type="function">
    <text evidence="1">Regulator of the DNA damage response (DDR). Part of the TTT complex that is required to stabilize protein levels of the phosphatidylinositol 3-kinase-related protein kinase (PIKK) family proteins. Promotes assembly, stabilizes and maintains the activity of TORC complexes, which regulate cell growth and survival in response to nutrient and hormonal signals. May be involved in telomere length regulation (By similarity).</text>
</comment>
<comment type="subcellular location">
    <subcellularLocation>
        <location evidence="1">Cytoplasm</location>
    </subcellularLocation>
    <subcellularLocation>
        <location evidence="1">Membrane</location>
    </subcellularLocation>
    <subcellularLocation>
        <location evidence="1">Nucleus</location>
    </subcellularLocation>
    <subcellularLocation>
        <location evidence="4">Chromosome</location>
        <location evidence="4">Telomere</location>
    </subcellularLocation>
</comment>
<comment type="alternative products">
    <event type="alternative splicing"/>
    <isoform>
        <id>Q08CY4-1</id>
        <name>1</name>
        <sequence type="displayed"/>
    </isoform>
    <isoform>
        <id>Q08CY4-2</id>
        <name>2</name>
        <sequence type="described" ref="VSP_031210"/>
    </isoform>
</comment>
<comment type="similarity">
    <text evidence="4">Belongs to the TEL2 family.</text>
</comment>
<dbReference type="EMBL" id="BC124033">
    <property type="protein sequence ID" value="AAI24034.1"/>
    <property type="molecule type" value="mRNA"/>
</dbReference>
<dbReference type="EMBL" id="BC135213">
    <property type="protein sequence ID" value="AAI35214.1"/>
    <property type="molecule type" value="mRNA"/>
</dbReference>
<dbReference type="RefSeq" id="NP_001072876.1">
    <molecule id="Q08CY4-1"/>
    <property type="nucleotide sequence ID" value="NM_001079408.1"/>
</dbReference>
<dbReference type="SMR" id="Q08CY4"/>
<dbReference type="FunCoup" id="Q08CY4">
    <property type="interactions" value="2056"/>
</dbReference>
<dbReference type="STRING" id="8364.ENSXETP00000002300"/>
<dbReference type="PaxDb" id="8364-ENSXETP00000022773"/>
<dbReference type="DNASU" id="780338"/>
<dbReference type="GeneID" id="780338"/>
<dbReference type="KEGG" id="xtr:780338"/>
<dbReference type="AGR" id="Xenbase:XB-GENE-1010705"/>
<dbReference type="CTD" id="9894"/>
<dbReference type="Xenbase" id="XB-GENE-1010705">
    <property type="gene designation" value="telo2"/>
</dbReference>
<dbReference type="eggNOG" id="KOG4346">
    <property type="taxonomic scope" value="Eukaryota"/>
</dbReference>
<dbReference type="HOGENOM" id="CLU_008764_1_0_1"/>
<dbReference type="InParanoid" id="Q08CY4"/>
<dbReference type="OrthoDB" id="10258062at2759"/>
<dbReference type="Proteomes" id="UP000008143">
    <property type="component" value="Chromosome 9"/>
</dbReference>
<dbReference type="GO" id="GO:0000781">
    <property type="term" value="C:chromosome, telomeric region"/>
    <property type="evidence" value="ECO:0007669"/>
    <property type="project" value="UniProtKB-SubCell"/>
</dbReference>
<dbReference type="GO" id="GO:0005737">
    <property type="term" value="C:cytoplasm"/>
    <property type="evidence" value="ECO:0007669"/>
    <property type="project" value="UniProtKB-SubCell"/>
</dbReference>
<dbReference type="GO" id="GO:0016020">
    <property type="term" value="C:membrane"/>
    <property type="evidence" value="ECO:0007669"/>
    <property type="project" value="UniProtKB-SubCell"/>
</dbReference>
<dbReference type="GO" id="GO:0005634">
    <property type="term" value="C:nucleus"/>
    <property type="evidence" value="ECO:0007669"/>
    <property type="project" value="UniProtKB-SubCell"/>
</dbReference>
<dbReference type="FunFam" id="1.25.40.720:FF:000001">
    <property type="entry name" value="Telomere length regulation protein TEL2"/>
    <property type="match status" value="1"/>
</dbReference>
<dbReference type="FunFam" id="1.25.40.720:FF:000003">
    <property type="entry name" value="Telomere length regulation protein TEL2 homolog"/>
    <property type="match status" value="1"/>
</dbReference>
<dbReference type="Gene3D" id="1.25.40.720">
    <property type="entry name" value="Telomere length regulation protein 2, C-terminal domain"/>
    <property type="match status" value="2"/>
</dbReference>
<dbReference type="InterPro" id="IPR038528">
    <property type="entry name" value="TEL2_C_sf"/>
</dbReference>
<dbReference type="InterPro" id="IPR051970">
    <property type="entry name" value="TEL2_Regulation"/>
</dbReference>
<dbReference type="InterPro" id="IPR019337">
    <property type="entry name" value="Telomere_length_regulation_dom"/>
</dbReference>
<dbReference type="PANTHER" id="PTHR15830">
    <property type="entry name" value="TELOMERE LENGTH REGULATION PROTEIN TEL2 FAMILY MEMBER"/>
    <property type="match status" value="1"/>
</dbReference>
<dbReference type="PANTHER" id="PTHR15830:SF10">
    <property type="entry name" value="TELOMERE LENGTH REGULATION PROTEIN TEL2 HOMOLOG"/>
    <property type="match status" value="1"/>
</dbReference>
<dbReference type="Pfam" id="PF25320">
    <property type="entry name" value="TELO2_ARM"/>
    <property type="match status" value="1"/>
</dbReference>
<dbReference type="Pfam" id="PF10193">
    <property type="entry name" value="Telomere_reg-2"/>
    <property type="match status" value="1"/>
</dbReference>
<gene>
    <name type="primary">telo2</name>
</gene>
<name>TELO2_XENTR</name>
<sequence>MAPVSTVVKNAISDLAKISDGERLREALLSLKSYLGTGENSAQTQETTEFNRNHYTPVLEFLVAQIGPQWLDLLTSERLELWDSFFLEGPPDQAFLVLMDSLGKTGPSIRLDRCVHVLERFLQRGALAEVIWEVCQQQLESNPTSVLHEAILGRISSLPDHLANCLQQHNKPLFYPKNYYPRLAGSIIRVLQMVSDALRDGKNCSISFASQVVGKVCMQGRQKELLSVLVPRLKSLVQSDCIWQRICWRLLESVPDRWMEPVLTGIVQTAPGAEVLSQLLGDLVVKNKRTQFLLTKKMLFLQYGLKKDALQSILGYLSLDASRRHLLVKVLRELLEVWSSGSVVKHSPHPQLLHVSRCLLICLGLLNKQEIESCKQDLLVSLTSGARNYLDSSVPTTRRMGMVVAECLSHHIDTEGPGLSFQYEEDEDTRDLKALLKPPHMVETDSADFVKRPVESSPSKSPLSSPEVREKSKVKVKADQASDSDLDSDDDLVPYDMSADTELKKSKAPAYIRDCIEVLLSDDVEKLEVTMASLATLIQANTLATKEVSMELAKILLHIDEKPSVARFTELRHAALVAVTVTDPVTVSQYLTSEFYSLNYSLRQRMDILDVLSSAAQSLSEKPSHETSAESGSVNTDPHSIRSTAWTSSEVPVNWRKVVEERIASKTRRFAKGHSAATPVPAPNRYHAVAGHFFFPLIQNYDRQIVTFDLLGEDRLVLGRMVHTLGILMHLTLNAPIASQMGKALLEFVWVLRSHTDAFVRQGLLFCISTVLLSVPWEHLMTDMAEEVVETQCWLAEVAERDSDDDCRRLALNGLFLMEKLRSNIQGNP</sequence>
<feature type="chain" id="PRO_0000318519" description="Telomere length regulation protein TEL2 homolog">
    <location>
        <begin position="1"/>
        <end position="829"/>
    </location>
</feature>
<feature type="region of interest" description="Disordered" evidence="2">
    <location>
        <begin position="446"/>
        <end position="493"/>
    </location>
</feature>
<feature type="region of interest" description="Disordered" evidence="2">
    <location>
        <begin position="620"/>
        <end position="641"/>
    </location>
</feature>
<feature type="compositionally biased region" description="Low complexity" evidence="2">
    <location>
        <begin position="456"/>
        <end position="466"/>
    </location>
</feature>
<feature type="compositionally biased region" description="Basic and acidic residues" evidence="2">
    <location>
        <begin position="467"/>
        <end position="480"/>
    </location>
</feature>
<feature type="compositionally biased region" description="Acidic residues" evidence="2">
    <location>
        <begin position="482"/>
        <end position="493"/>
    </location>
</feature>
<feature type="compositionally biased region" description="Polar residues" evidence="2">
    <location>
        <begin position="629"/>
        <end position="641"/>
    </location>
</feature>
<feature type="splice variant" id="VSP_031210" description="In isoform 2." evidence="3">
    <original>VKVKA</original>
    <variation>V</variation>
    <location>
        <begin position="474"/>
        <end position="478"/>
    </location>
</feature>
<feature type="sequence conflict" description="In Ref. 1; AAI35214." evidence="4" ref="1">
    <original>V</original>
    <variation>I</variation>
    <location>
        <position position="634"/>
    </location>
</feature>
<keyword id="KW-0025">Alternative splicing</keyword>
<keyword id="KW-0158">Chromosome</keyword>
<keyword id="KW-0963">Cytoplasm</keyword>
<keyword id="KW-0472">Membrane</keyword>
<keyword id="KW-0539">Nucleus</keyword>
<keyword id="KW-1185">Reference proteome</keyword>
<keyword id="KW-0779">Telomere</keyword>
<reference key="1">
    <citation type="submission" date="2006-09" db="EMBL/GenBank/DDBJ databases">
        <authorList>
            <consortium name="NIH - Xenopus Gene Collection (XGC) project"/>
        </authorList>
    </citation>
    <scope>NUCLEOTIDE SEQUENCE [LARGE SCALE MRNA] (ISOFORMS 1 AND 2)</scope>
    <source>
        <strain>N6</strain>
        <tissue>Oviduct</tissue>
    </source>
</reference>
<proteinExistence type="evidence at transcript level"/>
<evidence type="ECO:0000250" key="1"/>
<evidence type="ECO:0000256" key="2">
    <source>
        <dbReference type="SAM" id="MobiDB-lite"/>
    </source>
</evidence>
<evidence type="ECO:0000303" key="3">
    <source ref="1"/>
</evidence>
<evidence type="ECO:0000305" key="4"/>
<organism>
    <name type="scientific">Xenopus tropicalis</name>
    <name type="common">Western clawed frog</name>
    <name type="synonym">Silurana tropicalis</name>
    <dbReference type="NCBI Taxonomy" id="8364"/>
    <lineage>
        <taxon>Eukaryota</taxon>
        <taxon>Metazoa</taxon>
        <taxon>Chordata</taxon>
        <taxon>Craniata</taxon>
        <taxon>Vertebrata</taxon>
        <taxon>Euteleostomi</taxon>
        <taxon>Amphibia</taxon>
        <taxon>Batrachia</taxon>
        <taxon>Anura</taxon>
        <taxon>Pipoidea</taxon>
        <taxon>Pipidae</taxon>
        <taxon>Xenopodinae</taxon>
        <taxon>Xenopus</taxon>
        <taxon>Silurana</taxon>
    </lineage>
</organism>